<protein>
    <recommendedName>
        <fullName>UPF0213 protein gbs0798</fullName>
    </recommendedName>
</protein>
<sequence>MIKVPAYMYVLECSDGTLYTGYTTDVKRRLNTHNTGKGAKYTRARLPVKLLYSEAFNSKQEAMRAEALFKQKTRQAKLTYIKQHKNEQ</sequence>
<name>Y798_STRA3</name>
<accession>Q8E629</accession>
<gene>
    <name type="ordered locus">gbs0798</name>
</gene>
<comment type="similarity">
    <text evidence="2">Belongs to the UPF0213 family.</text>
</comment>
<reference key="1">
    <citation type="journal article" date="2002" name="Mol. Microbiol.">
        <title>Genome sequence of Streptococcus agalactiae, a pathogen causing invasive neonatal disease.</title>
        <authorList>
            <person name="Glaser P."/>
            <person name="Rusniok C."/>
            <person name="Buchrieser C."/>
            <person name="Chevalier F."/>
            <person name="Frangeul L."/>
            <person name="Msadek T."/>
            <person name="Zouine M."/>
            <person name="Couve E."/>
            <person name="Lalioui L."/>
            <person name="Poyart C."/>
            <person name="Trieu-Cuot P."/>
            <person name="Kunst F."/>
        </authorList>
    </citation>
    <scope>NUCLEOTIDE SEQUENCE [LARGE SCALE GENOMIC DNA]</scope>
    <source>
        <strain>NEM316</strain>
    </source>
</reference>
<dbReference type="EMBL" id="AL766847">
    <property type="protein sequence ID" value="CAD46442.1"/>
    <property type="molecule type" value="Genomic_DNA"/>
</dbReference>
<dbReference type="RefSeq" id="WP_000598736.1">
    <property type="nucleotide sequence ID" value="NC_004368.1"/>
</dbReference>
<dbReference type="SMR" id="Q8E629"/>
<dbReference type="KEGG" id="san:gbs0798"/>
<dbReference type="eggNOG" id="COG2827">
    <property type="taxonomic scope" value="Bacteria"/>
</dbReference>
<dbReference type="HOGENOM" id="CLU_135650_0_3_9"/>
<dbReference type="Proteomes" id="UP000000823">
    <property type="component" value="Chromosome"/>
</dbReference>
<dbReference type="CDD" id="cd10456">
    <property type="entry name" value="GIY-YIG_UPF0213"/>
    <property type="match status" value="1"/>
</dbReference>
<dbReference type="Gene3D" id="3.40.1440.10">
    <property type="entry name" value="GIY-YIG endonuclease"/>
    <property type="match status" value="1"/>
</dbReference>
<dbReference type="InterPro" id="IPR000305">
    <property type="entry name" value="GIY-YIG_endonuc"/>
</dbReference>
<dbReference type="InterPro" id="IPR035901">
    <property type="entry name" value="GIY-YIG_endonuc_sf"/>
</dbReference>
<dbReference type="InterPro" id="IPR050190">
    <property type="entry name" value="UPF0213_domain"/>
</dbReference>
<dbReference type="PANTHER" id="PTHR34477">
    <property type="entry name" value="UPF0213 PROTEIN YHBQ"/>
    <property type="match status" value="1"/>
</dbReference>
<dbReference type="PANTHER" id="PTHR34477:SF1">
    <property type="entry name" value="UPF0213 PROTEIN YHBQ"/>
    <property type="match status" value="1"/>
</dbReference>
<dbReference type="Pfam" id="PF01541">
    <property type="entry name" value="GIY-YIG"/>
    <property type="match status" value="1"/>
</dbReference>
<dbReference type="SUPFAM" id="SSF82771">
    <property type="entry name" value="GIY-YIG endonuclease"/>
    <property type="match status" value="1"/>
</dbReference>
<dbReference type="PROSITE" id="PS50164">
    <property type="entry name" value="GIY_YIG"/>
    <property type="match status" value="1"/>
</dbReference>
<organism>
    <name type="scientific">Streptococcus agalactiae serotype III (strain NEM316)</name>
    <dbReference type="NCBI Taxonomy" id="211110"/>
    <lineage>
        <taxon>Bacteria</taxon>
        <taxon>Bacillati</taxon>
        <taxon>Bacillota</taxon>
        <taxon>Bacilli</taxon>
        <taxon>Lactobacillales</taxon>
        <taxon>Streptococcaceae</taxon>
        <taxon>Streptococcus</taxon>
    </lineage>
</organism>
<proteinExistence type="inferred from homology"/>
<feature type="chain" id="PRO_0000161390" description="UPF0213 protein gbs0798">
    <location>
        <begin position="1"/>
        <end position="88"/>
    </location>
</feature>
<feature type="domain" description="GIY-YIG" evidence="1">
    <location>
        <begin position="4"/>
        <end position="80"/>
    </location>
</feature>
<evidence type="ECO:0000255" key="1">
    <source>
        <dbReference type="PROSITE-ProRule" id="PRU00977"/>
    </source>
</evidence>
<evidence type="ECO:0000305" key="2"/>